<proteinExistence type="inferred from homology"/>
<keyword id="KW-0067">ATP-binding</keyword>
<keyword id="KW-0963">Cytoplasm</keyword>
<keyword id="KW-0418">Kinase</keyword>
<keyword id="KW-0520">NAD</keyword>
<keyword id="KW-0521">NADP</keyword>
<keyword id="KW-0547">Nucleotide-binding</keyword>
<keyword id="KW-1185">Reference proteome</keyword>
<keyword id="KW-0808">Transferase</keyword>
<sequence>MRFGIVARRDREAALKLAYRVYDFLKVSGYDVLVDRETFENLPEFEEGDVVPLEEFDVDFIIAIGGDGTILRIEHKTKKDFPILGINMGTLGFLTEVEPHETFFALSRLLEGDYWIDERMKLRTYLNGENSVPDALNEDAILTGVPGKIVHLKYYVDGGLADEVRSDGVIVSTPTGSTGYALSAGGPFVDPRLELFVIAPINPIALSSRPMVVPSSSEIEIVPLPPERGLILTVDGQFYTHLSPDTEIKIKKSPRKARFVRFSHEIYPRYPFRLKKRF</sequence>
<name>NADK_THEGJ</name>
<feature type="chain" id="PRO_1000205432" description="NAD kinase">
    <location>
        <begin position="1"/>
        <end position="278"/>
    </location>
</feature>
<feature type="active site" description="Proton acceptor" evidence="1">
    <location>
        <position position="67"/>
    </location>
</feature>
<feature type="binding site" evidence="1">
    <location>
        <begin position="67"/>
        <end position="68"/>
    </location>
    <ligand>
        <name>NAD(+)</name>
        <dbReference type="ChEBI" id="CHEBI:57540"/>
    </ligand>
</feature>
<feature type="binding site" evidence="1">
    <location>
        <position position="72"/>
    </location>
    <ligand>
        <name>NAD(+)</name>
        <dbReference type="ChEBI" id="CHEBI:57540"/>
    </ligand>
</feature>
<feature type="binding site" evidence="1">
    <location>
        <begin position="137"/>
        <end position="138"/>
    </location>
    <ligand>
        <name>NAD(+)</name>
        <dbReference type="ChEBI" id="CHEBI:57540"/>
    </ligand>
</feature>
<feature type="binding site" evidence="1">
    <location>
        <position position="148"/>
    </location>
    <ligand>
        <name>NAD(+)</name>
        <dbReference type="ChEBI" id="CHEBI:57540"/>
    </ligand>
</feature>
<feature type="binding site" evidence="1">
    <location>
        <position position="165"/>
    </location>
    <ligand>
        <name>NAD(+)</name>
        <dbReference type="ChEBI" id="CHEBI:57540"/>
    </ligand>
</feature>
<feature type="binding site" evidence="1">
    <location>
        <position position="167"/>
    </location>
    <ligand>
        <name>NAD(+)</name>
        <dbReference type="ChEBI" id="CHEBI:57540"/>
    </ligand>
</feature>
<feature type="binding site" evidence="1">
    <location>
        <begin position="178"/>
        <end position="183"/>
    </location>
    <ligand>
        <name>NAD(+)</name>
        <dbReference type="ChEBI" id="CHEBI:57540"/>
    </ligand>
</feature>
<feature type="binding site" evidence="1">
    <location>
        <position position="237"/>
    </location>
    <ligand>
        <name>NAD(+)</name>
        <dbReference type="ChEBI" id="CHEBI:57540"/>
    </ligand>
</feature>
<organism>
    <name type="scientific">Thermococcus gammatolerans (strain DSM 15229 / JCM 11827 / EJ3)</name>
    <dbReference type="NCBI Taxonomy" id="593117"/>
    <lineage>
        <taxon>Archaea</taxon>
        <taxon>Methanobacteriati</taxon>
        <taxon>Methanobacteriota</taxon>
        <taxon>Thermococci</taxon>
        <taxon>Thermococcales</taxon>
        <taxon>Thermococcaceae</taxon>
        <taxon>Thermococcus</taxon>
    </lineage>
</organism>
<dbReference type="EC" id="2.7.1.23" evidence="1"/>
<dbReference type="EMBL" id="CP001398">
    <property type="protein sequence ID" value="ACS32790.1"/>
    <property type="molecule type" value="Genomic_DNA"/>
</dbReference>
<dbReference type="RefSeq" id="WP_015857909.1">
    <property type="nucleotide sequence ID" value="NC_012804.1"/>
</dbReference>
<dbReference type="SMR" id="C5A3H8"/>
<dbReference type="STRING" id="593117.TGAM_0288"/>
<dbReference type="PaxDb" id="593117-TGAM_0288"/>
<dbReference type="GeneID" id="7988944"/>
<dbReference type="KEGG" id="tga:TGAM_0288"/>
<dbReference type="PATRIC" id="fig|593117.10.peg.290"/>
<dbReference type="eggNOG" id="arCOG01348">
    <property type="taxonomic scope" value="Archaea"/>
</dbReference>
<dbReference type="HOGENOM" id="CLU_008831_0_3_2"/>
<dbReference type="OrthoDB" id="77798at2157"/>
<dbReference type="Proteomes" id="UP000001488">
    <property type="component" value="Chromosome"/>
</dbReference>
<dbReference type="GO" id="GO:0005737">
    <property type="term" value="C:cytoplasm"/>
    <property type="evidence" value="ECO:0007669"/>
    <property type="project" value="UniProtKB-SubCell"/>
</dbReference>
<dbReference type="GO" id="GO:0005524">
    <property type="term" value="F:ATP binding"/>
    <property type="evidence" value="ECO:0007669"/>
    <property type="project" value="UniProtKB-KW"/>
</dbReference>
<dbReference type="GO" id="GO:0046872">
    <property type="term" value="F:metal ion binding"/>
    <property type="evidence" value="ECO:0007669"/>
    <property type="project" value="UniProtKB-UniRule"/>
</dbReference>
<dbReference type="GO" id="GO:0003951">
    <property type="term" value="F:NAD+ kinase activity"/>
    <property type="evidence" value="ECO:0007669"/>
    <property type="project" value="UniProtKB-UniRule"/>
</dbReference>
<dbReference type="GO" id="GO:0019674">
    <property type="term" value="P:NAD metabolic process"/>
    <property type="evidence" value="ECO:0007669"/>
    <property type="project" value="InterPro"/>
</dbReference>
<dbReference type="GO" id="GO:0006741">
    <property type="term" value="P:NADP biosynthetic process"/>
    <property type="evidence" value="ECO:0007669"/>
    <property type="project" value="UniProtKB-UniRule"/>
</dbReference>
<dbReference type="Gene3D" id="3.40.50.10330">
    <property type="entry name" value="Probable inorganic polyphosphate/atp-NAD kinase, domain 1"/>
    <property type="match status" value="1"/>
</dbReference>
<dbReference type="Gene3D" id="2.60.200.30">
    <property type="entry name" value="Probable inorganic polyphosphate/atp-NAD kinase, domain 2"/>
    <property type="match status" value="1"/>
</dbReference>
<dbReference type="HAMAP" id="MF_00361">
    <property type="entry name" value="NAD_kinase"/>
    <property type="match status" value="1"/>
</dbReference>
<dbReference type="InterPro" id="IPR017438">
    <property type="entry name" value="ATP-NAD_kinase_N"/>
</dbReference>
<dbReference type="InterPro" id="IPR017437">
    <property type="entry name" value="ATP-NAD_kinase_PpnK-typ_C"/>
</dbReference>
<dbReference type="InterPro" id="IPR016064">
    <property type="entry name" value="NAD/diacylglycerol_kinase_sf"/>
</dbReference>
<dbReference type="InterPro" id="IPR002504">
    <property type="entry name" value="NADK"/>
</dbReference>
<dbReference type="NCBIfam" id="NF002984">
    <property type="entry name" value="PRK03708.1"/>
    <property type="match status" value="1"/>
</dbReference>
<dbReference type="PANTHER" id="PTHR20275:SF43">
    <property type="entry name" value="BIFUNCTIONAL NADP PHOSPHATASE_NAD KINASE"/>
    <property type="match status" value="1"/>
</dbReference>
<dbReference type="PANTHER" id="PTHR20275">
    <property type="entry name" value="NAD KINASE"/>
    <property type="match status" value="1"/>
</dbReference>
<dbReference type="Pfam" id="PF01513">
    <property type="entry name" value="NAD_kinase"/>
    <property type="match status" value="1"/>
</dbReference>
<dbReference type="Pfam" id="PF20143">
    <property type="entry name" value="NAD_kinase_C"/>
    <property type="match status" value="1"/>
</dbReference>
<dbReference type="SUPFAM" id="SSF111331">
    <property type="entry name" value="NAD kinase/diacylglycerol kinase-like"/>
    <property type="match status" value="1"/>
</dbReference>
<accession>C5A3H8</accession>
<evidence type="ECO:0000255" key="1">
    <source>
        <dbReference type="HAMAP-Rule" id="MF_00361"/>
    </source>
</evidence>
<protein>
    <recommendedName>
        <fullName evidence="1">NAD kinase</fullName>
        <ecNumber evidence="1">2.7.1.23</ecNumber>
    </recommendedName>
    <alternativeName>
        <fullName evidence="1">ATP-dependent NAD kinase</fullName>
    </alternativeName>
</protein>
<gene>
    <name evidence="1" type="primary">nadK</name>
    <name type="ordered locus">TGAM_0288</name>
</gene>
<comment type="function">
    <text evidence="1">Involved in the regulation of the intracellular balance of NAD and NADP, and is a key enzyme in the biosynthesis of NADP. Catalyzes specifically the phosphorylation on 2'-hydroxyl of the adenosine moiety of NAD to yield NADP.</text>
</comment>
<comment type="catalytic activity">
    <reaction evidence="1">
        <text>NAD(+) + ATP = ADP + NADP(+) + H(+)</text>
        <dbReference type="Rhea" id="RHEA:18629"/>
        <dbReference type="ChEBI" id="CHEBI:15378"/>
        <dbReference type="ChEBI" id="CHEBI:30616"/>
        <dbReference type="ChEBI" id="CHEBI:57540"/>
        <dbReference type="ChEBI" id="CHEBI:58349"/>
        <dbReference type="ChEBI" id="CHEBI:456216"/>
        <dbReference type="EC" id="2.7.1.23"/>
    </reaction>
</comment>
<comment type="cofactor">
    <cofactor evidence="1">
        <name>a divalent metal cation</name>
        <dbReference type="ChEBI" id="CHEBI:60240"/>
    </cofactor>
</comment>
<comment type="subcellular location">
    <subcellularLocation>
        <location evidence="1">Cytoplasm</location>
    </subcellularLocation>
</comment>
<comment type="similarity">
    <text evidence="1">Belongs to the NAD kinase family.</text>
</comment>
<reference key="1">
    <citation type="journal article" date="2007" name="Genome Biol.">
        <title>Genome analysis and genome-wide proteomics of Thermococcus gammatolerans, the most radioresistant organism known amongst the Archaea.</title>
        <authorList>
            <person name="Zivanovic Y."/>
            <person name="Armengaud J."/>
            <person name="Lagorce A."/>
            <person name="Leplat C."/>
            <person name="Guerin P."/>
            <person name="Dutertre M."/>
            <person name="Anthouard V."/>
            <person name="Forterre P."/>
            <person name="Wincker P."/>
            <person name="Confalonieri F."/>
        </authorList>
    </citation>
    <scope>NUCLEOTIDE SEQUENCE [LARGE SCALE GENOMIC DNA]</scope>
    <source>
        <strain>DSM 15229 / JCM 11827 / EJ3</strain>
    </source>
</reference>